<comment type="function">
    <text evidence="1">Prothymosin alpha may mediate immune function by conferring resistance to certain opportunistic infections.</text>
</comment>
<comment type="subunit">
    <text evidence="3">Interacts with NUPR1; regulates apoptotic process.</text>
</comment>
<comment type="subcellular location">
    <subcellularLocation>
        <location evidence="1">Nucleus</location>
    </subcellularLocation>
</comment>
<comment type="PTM">
    <text evidence="1">Covalently linked to a small RNA of about 20 nucleotides.</text>
</comment>
<comment type="similarity">
    <text evidence="6">Belongs to the pro/parathymosin family.</text>
</comment>
<gene>
    <name type="primary">PTMA</name>
</gene>
<reference key="1">
    <citation type="submission" date="2004-11" db="EMBL/GenBank/DDBJ databases">
        <authorList>
            <consortium name="The German cDNA consortium"/>
        </authorList>
    </citation>
    <scope>NUCLEOTIDE SEQUENCE [LARGE SCALE MRNA]</scope>
    <source>
        <tissue>Kidney</tissue>
    </source>
</reference>
<protein>
    <recommendedName>
        <fullName>Prothymosin alpha</fullName>
    </recommendedName>
    <component>
        <recommendedName>
            <fullName>Prothymosin alpha, N-terminally processed</fullName>
        </recommendedName>
    </component>
    <component>
        <recommendedName>
            <fullName>Thymosin alpha</fullName>
        </recommendedName>
    </component>
</protein>
<keyword id="KW-0007">Acetylation</keyword>
<keyword id="KW-1017">Isopeptide bond</keyword>
<keyword id="KW-0539">Nucleus</keyword>
<keyword id="KW-0597">Phosphoprotein</keyword>
<keyword id="KW-1185">Reference proteome</keyword>
<keyword id="KW-0832">Ubl conjugation</keyword>
<proteinExistence type="inferred from homology"/>
<feature type="chain" id="PRO_0000423257" description="Prothymosin alpha">
    <location>
        <begin position="1"/>
        <end position="110"/>
    </location>
</feature>
<feature type="initiator methionine" description="Removed; alternate" evidence="2">
    <location>
        <position position="1"/>
    </location>
</feature>
<feature type="chain" id="PRO_0000299252" description="Prothymosin alpha, N-terminally processed">
    <location>
        <begin position="2"/>
        <end position="110"/>
    </location>
</feature>
<feature type="peptide" id="PRO_0000424825" description="Thymosin alpha">
    <location>
        <begin position="2"/>
        <end position="29"/>
    </location>
</feature>
<feature type="region of interest" description="Disordered" evidence="5">
    <location>
        <begin position="1"/>
        <end position="110"/>
    </location>
</feature>
<feature type="compositionally biased region" description="Basic and acidic residues" evidence="5">
    <location>
        <begin position="13"/>
        <end position="31"/>
    </location>
</feature>
<feature type="compositionally biased region" description="Acidic residues" evidence="5">
    <location>
        <begin position="42"/>
        <end position="83"/>
    </location>
</feature>
<feature type="compositionally biased region" description="Basic and acidic residues" evidence="5">
    <location>
        <begin position="100"/>
        <end position="110"/>
    </location>
</feature>
<feature type="modified residue" description="N-acetylmethionine" evidence="3">
    <location>
        <position position="1"/>
    </location>
</feature>
<feature type="modified residue" description="N-acetylserine; in Prothymosin alpha, N-terminally processed" evidence="2">
    <location>
        <position position="2"/>
    </location>
</feature>
<feature type="modified residue" description="Phosphoserine" evidence="2">
    <location>
        <position position="2"/>
    </location>
</feature>
<feature type="modified residue" description="Phosphothreonine" evidence="2">
    <location>
        <position position="8"/>
    </location>
</feature>
<feature type="modified residue" description="Phosphoserine" evidence="3">
    <location>
        <position position="9"/>
    </location>
</feature>
<feature type="modified residue" description="Phosphoserine" evidence="3">
    <location>
        <position position="10"/>
    </location>
</feature>
<feature type="modified residue" description="Phosphothreonine" evidence="2">
    <location>
        <position position="13"/>
    </location>
</feature>
<feature type="modified residue" description="Phosphothreonine" evidence="2">
    <location>
        <position position="14"/>
    </location>
</feature>
<feature type="modified residue" description="N6-acetyllysine; alternate" evidence="3">
    <location>
        <position position="15"/>
    </location>
</feature>
<feature type="modified residue" description="N6-succinyllysine; alternate" evidence="4">
    <location>
        <position position="15"/>
    </location>
</feature>
<feature type="modified residue" description="Phosphothreonine" evidence="3">
    <location>
        <position position="101"/>
    </location>
</feature>
<feature type="modified residue" description="N6-acetyllysine; alternate" evidence="4">
    <location>
        <position position="102"/>
    </location>
</feature>
<feature type="modified residue" description="Phosphothreonine" evidence="3">
    <location>
        <position position="106"/>
    </location>
</feature>
<feature type="cross-link" description="Glycyl lysine isopeptide (Lys-Gly) (interchain with G-Cter in SUMO2); alternate" evidence="3">
    <location>
        <position position="102"/>
    </location>
</feature>
<organism>
    <name type="scientific">Pongo abelii</name>
    <name type="common">Sumatran orangutan</name>
    <name type="synonym">Pongo pygmaeus abelii</name>
    <dbReference type="NCBI Taxonomy" id="9601"/>
    <lineage>
        <taxon>Eukaryota</taxon>
        <taxon>Metazoa</taxon>
        <taxon>Chordata</taxon>
        <taxon>Craniata</taxon>
        <taxon>Vertebrata</taxon>
        <taxon>Euteleostomi</taxon>
        <taxon>Mammalia</taxon>
        <taxon>Eutheria</taxon>
        <taxon>Euarchontoglires</taxon>
        <taxon>Primates</taxon>
        <taxon>Haplorrhini</taxon>
        <taxon>Catarrhini</taxon>
        <taxon>Hominidae</taxon>
        <taxon>Pongo</taxon>
    </lineage>
</organism>
<evidence type="ECO:0000250" key="1"/>
<evidence type="ECO:0000250" key="2">
    <source>
        <dbReference type="UniProtKB" id="P01252"/>
    </source>
</evidence>
<evidence type="ECO:0000250" key="3">
    <source>
        <dbReference type="UniProtKB" id="P06454"/>
    </source>
</evidence>
<evidence type="ECO:0000250" key="4">
    <source>
        <dbReference type="UniProtKB" id="P26350"/>
    </source>
</evidence>
<evidence type="ECO:0000256" key="5">
    <source>
        <dbReference type="SAM" id="MobiDB-lite"/>
    </source>
</evidence>
<evidence type="ECO:0000305" key="6"/>
<name>PTMA_PONAB</name>
<accession>Q5R790</accession>
<sequence>MSDAAVDTSSEITTKDLKEKKEVVEEAENGRDVPANGNANEENGEQEADNEVDEEEEEGGEEEEEEEEGDGEEEDGDEDEEAESATGKRAAEDDEDDDVDTKKQKTDEDD</sequence>
<dbReference type="EMBL" id="CR860228">
    <property type="protein sequence ID" value="CAH92370.1"/>
    <property type="molecule type" value="mRNA"/>
</dbReference>
<dbReference type="RefSeq" id="NP_001126395.1">
    <property type="nucleotide sequence ID" value="NM_001132923.1"/>
</dbReference>
<dbReference type="BMRB" id="Q5R790"/>
<dbReference type="SMR" id="Q5R790"/>
<dbReference type="FunCoup" id="Q5R790">
    <property type="interactions" value="2353"/>
</dbReference>
<dbReference type="STRING" id="9601.ENSPPYP00000004369"/>
<dbReference type="GeneID" id="100173377"/>
<dbReference type="KEGG" id="pon:100173377"/>
<dbReference type="CTD" id="5757"/>
<dbReference type="eggNOG" id="ENOG502S55T">
    <property type="taxonomic scope" value="Eukaryota"/>
</dbReference>
<dbReference type="InParanoid" id="Q5R790"/>
<dbReference type="Proteomes" id="UP000001595">
    <property type="component" value="Unplaced"/>
</dbReference>
<dbReference type="GO" id="GO:0005634">
    <property type="term" value="C:nucleus"/>
    <property type="evidence" value="ECO:0007669"/>
    <property type="project" value="UniProtKB-SubCell"/>
</dbReference>
<dbReference type="GO" id="GO:0042393">
    <property type="term" value="F:histone binding"/>
    <property type="evidence" value="ECO:0007669"/>
    <property type="project" value="TreeGrafter"/>
</dbReference>
<dbReference type="GO" id="GO:0043066">
    <property type="term" value="P:negative regulation of apoptotic process"/>
    <property type="evidence" value="ECO:0007669"/>
    <property type="project" value="TreeGrafter"/>
</dbReference>
<dbReference type="GO" id="GO:0045944">
    <property type="term" value="P:positive regulation of transcription by RNA polymerase II"/>
    <property type="evidence" value="ECO:0007669"/>
    <property type="project" value="TreeGrafter"/>
</dbReference>
<dbReference type="InterPro" id="IPR004931">
    <property type="entry name" value="Pro/parathymosin"/>
</dbReference>
<dbReference type="PANTHER" id="PTHR22745">
    <property type="entry name" value="PROTHYMOSIN ALPHA"/>
    <property type="match status" value="1"/>
</dbReference>
<dbReference type="PANTHER" id="PTHR22745:SF0">
    <property type="entry name" value="PROTHYMOSIN ALPHA"/>
    <property type="match status" value="1"/>
</dbReference>
<dbReference type="Pfam" id="PF03247">
    <property type="entry name" value="Prothymosin"/>
    <property type="match status" value="1"/>
</dbReference>